<proteinExistence type="evidence at protein level"/>
<feature type="initiator methionine" description="Removed" evidence="2">
    <location>
        <position position="1"/>
    </location>
</feature>
<feature type="chain" id="PRO_0000118944" description="Exocyst complex component 5">
    <location>
        <begin position="2"/>
        <end position="708"/>
    </location>
</feature>
<feature type="coiled-coil region" evidence="4">
    <location>
        <begin position="40"/>
        <end position="101"/>
    </location>
</feature>
<feature type="modified residue" description="N-acetylalanine" evidence="2">
    <location>
        <position position="2"/>
    </location>
</feature>
<feature type="modified residue" description="Phosphothreonine" evidence="7">
    <location>
        <position position="122"/>
    </location>
</feature>
<feature type="modified residue" description="Phosphothreonine" evidence="3">
    <location>
        <position position="395"/>
    </location>
</feature>
<feature type="modified residue" description="Phosphothreonine" evidence="3">
    <location>
        <position position="405"/>
    </location>
</feature>
<feature type="modified residue" description="Phosphoserine" evidence="3">
    <location>
        <position position="412"/>
    </location>
</feature>
<feature type="sequence conflict" description="In Ref. 1; BAE37611." evidence="6" ref="1">
    <original>G</original>
    <variation>D</variation>
    <location>
        <position position="628"/>
    </location>
</feature>
<accession>Q3TPX4</accession>
<accession>Q80VK3</accession>
<sequence length="708" mass="81738">MATTAELFEEPFVADEYIERLVWRTPGGGSRGGPEAFDPKRLLEEFVNHIQELQIMDERIQRKVEKLEQQCQKEAKEFAKKVQELQKSNQVAFQHFQELDEHISYVATKVCHLGDQLEGVNTPRQRAVEAQKLMKYFNEFLDGELKSDVFTNSEKIKEAADVIQKLHLIAQELPFDRFSEVKSKIASKYHDLECQLIQEFTSAQRRGEVSRMREVAAVLLHFKGYSHCIDVYIKQCQEGAYLRNDIFEDAAILCQRVNKQVGDIFSNPEAVLAKLIQSVFEIKLQSFVKDQLEECRKSDAEQYLKSLYDLYTRTTGLSSKLMEFNLGTDKQTFLSKLIKSIFISYLENYIEVEIGYLKSRSAMILQRYYDSKNHQKRSIGTGGIQDLKERIRQRTNLPLGPSIDTHGETFLSQEVVVNLLQETKQAFERCHRLSDPSDLPRNAFRIFTILVEFLCIEHIDYALETGLAGIPSSDSRNANLYFLDVVQQANTIFHLFDKQFNDHLMPLISSSPKLSECLQKKKEIIEQMEMKLDTGIDRTLNCMIGQMKHILAAEQKKTDFKPEDENNVLIQYTNACVKVCVYVRKQVEKIKNSMDGKNVDTVLMELGVRFHRLIYEHLQQYSYSCMGGMLAICDVAEYRKCAKDFKIPMVLHLFDTLHALCNLLVVAPDNLKQVCSGEQLANLDKNILHSFVQLRADYRSARLARHFS</sequence>
<name>EXOC5_MOUSE</name>
<gene>
    <name type="primary">Exoc5</name>
    <name type="synonym">Sec10l1</name>
</gene>
<reference key="1">
    <citation type="journal article" date="2005" name="Science">
        <title>The transcriptional landscape of the mammalian genome.</title>
        <authorList>
            <person name="Carninci P."/>
            <person name="Kasukawa T."/>
            <person name="Katayama S."/>
            <person name="Gough J."/>
            <person name="Frith M.C."/>
            <person name="Maeda N."/>
            <person name="Oyama R."/>
            <person name="Ravasi T."/>
            <person name="Lenhard B."/>
            <person name="Wells C."/>
            <person name="Kodzius R."/>
            <person name="Shimokawa K."/>
            <person name="Bajic V.B."/>
            <person name="Brenner S.E."/>
            <person name="Batalov S."/>
            <person name="Forrest A.R."/>
            <person name="Zavolan M."/>
            <person name="Davis M.J."/>
            <person name="Wilming L.G."/>
            <person name="Aidinis V."/>
            <person name="Allen J.E."/>
            <person name="Ambesi-Impiombato A."/>
            <person name="Apweiler R."/>
            <person name="Aturaliya R.N."/>
            <person name="Bailey T.L."/>
            <person name="Bansal M."/>
            <person name="Baxter L."/>
            <person name="Beisel K.W."/>
            <person name="Bersano T."/>
            <person name="Bono H."/>
            <person name="Chalk A.M."/>
            <person name="Chiu K.P."/>
            <person name="Choudhary V."/>
            <person name="Christoffels A."/>
            <person name="Clutterbuck D.R."/>
            <person name="Crowe M.L."/>
            <person name="Dalla E."/>
            <person name="Dalrymple B.P."/>
            <person name="de Bono B."/>
            <person name="Della Gatta G."/>
            <person name="di Bernardo D."/>
            <person name="Down T."/>
            <person name="Engstrom P."/>
            <person name="Fagiolini M."/>
            <person name="Faulkner G."/>
            <person name="Fletcher C.F."/>
            <person name="Fukushima T."/>
            <person name="Furuno M."/>
            <person name="Futaki S."/>
            <person name="Gariboldi M."/>
            <person name="Georgii-Hemming P."/>
            <person name="Gingeras T.R."/>
            <person name="Gojobori T."/>
            <person name="Green R.E."/>
            <person name="Gustincich S."/>
            <person name="Harbers M."/>
            <person name="Hayashi Y."/>
            <person name="Hensch T.K."/>
            <person name="Hirokawa N."/>
            <person name="Hill D."/>
            <person name="Huminiecki L."/>
            <person name="Iacono M."/>
            <person name="Ikeo K."/>
            <person name="Iwama A."/>
            <person name="Ishikawa T."/>
            <person name="Jakt M."/>
            <person name="Kanapin A."/>
            <person name="Katoh M."/>
            <person name="Kawasawa Y."/>
            <person name="Kelso J."/>
            <person name="Kitamura H."/>
            <person name="Kitano H."/>
            <person name="Kollias G."/>
            <person name="Krishnan S.P."/>
            <person name="Kruger A."/>
            <person name="Kummerfeld S.K."/>
            <person name="Kurochkin I.V."/>
            <person name="Lareau L.F."/>
            <person name="Lazarevic D."/>
            <person name="Lipovich L."/>
            <person name="Liu J."/>
            <person name="Liuni S."/>
            <person name="McWilliam S."/>
            <person name="Madan Babu M."/>
            <person name="Madera M."/>
            <person name="Marchionni L."/>
            <person name="Matsuda H."/>
            <person name="Matsuzawa S."/>
            <person name="Miki H."/>
            <person name="Mignone F."/>
            <person name="Miyake S."/>
            <person name="Morris K."/>
            <person name="Mottagui-Tabar S."/>
            <person name="Mulder N."/>
            <person name="Nakano N."/>
            <person name="Nakauchi H."/>
            <person name="Ng P."/>
            <person name="Nilsson R."/>
            <person name="Nishiguchi S."/>
            <person name="Nishikawa S."/>
            <person name="Nori F."/>
            <person name="Ohara O."/>
            <person name="Okazaki Y."/>
            <person name="Orlando V."/>
            <person name="Pang K.C."/>
            <person name="Pavan W.J."/>
            <person name="Pavesi G."/>
            <person name="Pesole G."/>
            <person name="Petrovsky N."/>
            <person name="Piazza S."/>
            <person name="Reed J."/>
            <person name="Reid J.F."/>
            <person name="Ring B.Z."/>
            <person name="Ringwald M."/>
            <person name="Rost B."/>
            <person name="Ruan Y."/>
            <person name="Salzberg S.L."/>
            <person name="Sandelin A."/>
            <person name="Schneider C."/>
            <person name="Schoenbach C."/>
            <person name="Sekiguchi K."/>
            <person name="Semple C.A."/>
            <person name="Seno S."/>
            <person name="Sessa L."/>
            <person name="Sheng Y."/>
            <person name="Shibata Y."/>
            <person name="Shimada H."/>
            <person name="Shimada K."/>
            <person name="Silva D."/>
            <person name="Sinclair B."/>
            <person name="Sperling S."/>
            <person name="Stupka E."/>
            <person name="Sugiura K."/>
            <person name="Sultana R."/>
            <person name="Takenaka Y."/>
            <person name="Taki K."/>
            <person name="Tammoja K."/>
            <person name="Tan S.L."/>
            <person name="Tang S."/>
            <person name="Taylor M.S."/>
            <person name="Tegner J."/>
            <person name="Teichmann S.A."/>
            <person name="Ueda H.R."/>
            <person name="van Nimwegen E."/>
            <person name="Verardo R."/>
            <person name="Wei C.L."/>
            <person name="Yagi K."/>
            <person name="Yamanishi H."/>
            <person name="Zabarovsky E."/>
            <person name="Zhu S."/>
            <person name="Zimmer A."/>
            <person name="Hide W."/>
            <person name="Bult C."/>
            <person name="Grimmond S.M."/>
            <person name="Teasdale R.D."/>
            <person name="Liu E.T."/>
            <person name="Brusic V."/>
            <person name="Quackenbush J."/>
            <person name="Wahlestedt C."/>
            <person name="Mattick J.S."/>
            <person name="Hume D.A."/>
            <person name="Kai C."/>
            <person name="Sasaki D."/>
            <person name="Tomaru Y."/>
            <person name="Fukuda S."/>
            <person name="Kanamori-Katayama M."/>
            <person name="Suzuki M."/>
            <person name="Aoki J."/>
            <person name="Arakawa T."/>
            <person name="Iida J."/>
            <person name="Imamura K."/>
            <person name="Itoh M."/>
            <person name="Kato T."/>
            <person name="Kawaji H."/>
            <person name="Kawagashira N."/>
            <person name="Kawashima T."/>
            <person name="Kojima M."/>
            <person name="Kondo S."/>
            <person name="Konno H."/>
            <person name="Nakano K."/>
            <person name="Ninomiya N."/>
            <person name="Nishio T."/>
            <person name="Okada M."/>
            <person name="Plessy C."/>
            <person name="Shibata K."/>
            <person name="Shiraki T."/>
            <person name="Suzuki S."/>
            <person name="Tagami M."/>
            <person name="Waki K."/>
            <person name="Watahiki A."/>
            <person name="Okamura-Oho Y."/>
            <person name="Suzuki H."/>
            <person name="Kawai J."/>
            <person name="Hayashizaki Y."/>
        </authorList>
    </citation>
    <scope>NUCLEOTIDE SEQUENCE [LARGE SCALE MRNA]</scope>
    <source>
        <strain>C57BL/6J</strain>
        <strain>NOD</strain>
        <tissue>Spleen</tissue>
    </source>
</reference>
<reference key="2">
    <citation type="submission" date="2005-07" db="EMBL/GenBank/DDBJ databases">
        <authorList>
            <person name="Mural R.J."/>
            <person name="Adams M.D."/>
            <person name="Myers E.W."/>
            <person name="Smith H.O."/>
            <person name="Venter J.C."/>
        </authorList>
    </citation>
    <scope>NUCLEOTIDE SEQUENCE [LARGE SCALE GENOMIC DNA]</scope>
</reference>
<reference key="3">
    <citation type="journal article" date="2004" name="Genome Res.">
        <title>The status, quality, and expansion of the NIH full-length cDNA project: the Mammalian Gene Collection (MGC).</title>
        <authorList>
            <consortium name="The MGC Project Team"/>
        </authorList>
    </citation>
    <scope>NUCLEOTIDE SEQUENCE [LARGE SCALE MRNA]</scope>
    <source>
        <strain>FVB/N</strain>
        <tissue>Mammary tumor</tissue>
    </source>
</reference>
<reference key="4">
    <citation type="journal article" date="2006" name="Mol. Cell. Proteomics">
        <title>Comprehensive identification of phosphorylation sites in postsynaptic density preparations.</title>
        <authorList>
            <person name="Trinidad J.C."/>
            <person name="Specht C.G."/>
            <person name="Thalhammer A."/>
            <person name="Schoepfer R."/>
            <person name="Burlingame A.L."/>
        </authorList>
    </citation>
    <scope>IDENTIFICATION BY MASS SPECTROMETRY [LARGE SCALE ANALYSIS]</scope>
    <source>
        <tissue>Brain</tissue>
    </source>
</reference>
<reference key="5">
    <citation type="journal article" date="2008" name="Biomed. Res.">
        <title>Involvement of Exoc3l, a protein structurally related to the exocyst subunit Sec6, in insulin secretion.</title>
        <authorList>
            <person name="Saito T."/>
            <person name="Shibasaki T."/>
            <person name="Seino S."/>
        </authorList>
    </citation>
    <scope>INTERACTION WITH EXOC3L1</scope>
</reference>
<reference key="6">
    <citation type="journal article" date="2010" name="Cell">
        <title>A tissue-specific atlas of mouse protein phosphorylation and expression.</title>
        <authorList>
            <person name="Huttlin E.L."/>
            <person name="Jedrychowski M.P."/>
            <person name="Elias J.E."/>
            <person name="Goswami T."/>
            <person name="Rad R."/>
            <person name="Beausoleil S.A."/>
            <person name="Villen J."/>
            <person name="Haas W."/>
            <person name="Sowa M.E."/>
            <person name="Gygi S.P."/>
        </authorList>
    </citation>
    <scope>PHOSPHORYLATION [LARGE SCALE ANALYSIS] AT THR-122</scope>
    <scope>IDENTIFICATION BY MASS SPECTROMETRY [LARGE SCALE ANALYSIS]</scope>
    <source>
        <tissue>Brain</tissue>
        <tissue>Brown adipose tissue</tissue>
        <tissue>Kidney</tissue>
        <tissue>Lung</tissue>
        <tissue>Spleen</tissue>
        <tissue>Testis</tissue>
    </source>
</reference>
<organism>
    <name type="scientific">Mus musculus</name>
    <name type="common">Mouse</name>
    <dbReference type="NCBI Taxonomy" id="10090"/>
    <lineage>
        <taxon>Eukaryota</taxon>
        <taxon>Metazoa</taxon>
        <taxon>Chordata</taxon>
        <taxon>Craniata</taxon>
        <taxon>Vertebrata</taxon>
        <taxon>Euteleostomi</taxon>
        <taxon>Mammalia</taxon>
        <taxon>Eutheria</taxon>
        <taxon>Euarchontoglires</taxon>
        <taxon>Glires</taxon>
        <taxon>Rodentia</taxon>
        <taxon>Myomorpha</taxon>
        <taxon>Muroidea</taxon>
        <taxon>Muridae</taxon>
        <taxon>Murinae</taxon>
        <taxon>Mus</taxon>
        <taxon>Mus</taxon>
    </lineage>
</organism>
<evidence type="ECO:0000250" key="1"/>
<evidence type="ECO:0000250" key="2">
    <source>
        <dbReference type="UniProtKB" id="O00471"/>
    </source>
</evidence>
<evidence type="ECO:0000250" key="3">
    <source>
        <dbReference type="UniProtKB" id="P97878"/>
    </source>
</evidence>
<evidence type="ECO:0000255" key="4"/>
<evidence type="ECO:0000269" key="5">
    <source>
    </source>
</evidence>
<evidence type="ECO:0000305" key="6"/>
<evidence type="ECO:0007744" key="7">
    <source>
    </source>
</evidence>
<keyword id="KW-0007">Acetylation</keyword>
<keyword id="KW-0175">Coiled coil</keyword>
<keyword id="KW-0963">Cytoplasm</keyword>
<keyword id="KW-0268">Exocytosis</keyword>
<keyword id="KW-0597">Phosphoprotein</keyword>
<keyword id="KW-0653">Protein transport</keyword>
<keyword id="KW-1185">Reference proteome</keyword>
<keyword id="KW-0813">Transport</keyword>
<dbReference type="EMBL" id="AK164067">
    <property type="protein sequence ID" value="BAE37611.1"/>
    <property type="molecule type" value="mRNA"/>
</dbReference>
<dbReference type="EMBL" id="AK157473">
    <property type="protein sequence ID" value="BAE34093.1"/>
    <property type="molecule type" value="mRNA"/>
</dbReference>
<dbReference type="EMBL" id="AK167145">
    <property type="protein sequence ID" value="BAE39290.1"/>
    <property type="molecule type" value="mRNA"/>
</dbReference>
<dbReference type="EMBL" id="AK171012">
    <property type="protein sequence ID" value="BAE42183.1"/>
    <property type="molecule type" value="mRNA"/>
</dbReference>
<dbReference type="EMBL" id="CH466605">
    <property type="protein sequence ID" value="EDL20783.1"/>
    <property type="molecule type" value="Genomic_DNA"/>
</dbReference>
<dbReference type="EMBL" id="BC049967">
    <property type="protein sequence ID" value="AAH49967.1"/>
    <property type="molecule type" value="mRNA"/>
</dbReference>
<dbReference type="CCDS" id="CCDS49474.1"/>
<dbReference type="RefSeq" id="NP_997097.1">
    <property type="nucleotide sequence ID" value="NM_207214.3"/>
</dbReference>
<dbReference type="SMR" id="Q3TPX4"/>
<dbReference type="BioGRID" id="222868">
    <property type="interactions" value="2"/>
</dbReference>
<dbReference type="ComplexPortal" id="CPX-4982">
    <property type="entry name" value="Exocyst, Exoc6 variant"/>
</dbReference>
<dbReference type="ComplexPortal" id="CPX-4983">
    <property type="entry name" value="Exocyst, Exoc6b variant"/>
</dbReference>
<dbReference type="FunCoup" id="Q3TPX4">
    <property type="interactions" value="3791"/>
</dbReference>
<dbReference type="IntAct" id="Q3TPX4">
    <property type="interactions" value="2"/>
</dbReference>
<dbReference type="MINT" id="Q3TPX4"/>
<dbReference type="STRING" id="10090.ENSMUSP00000125434"/>
<dbReference type="iPTMnet" id="Q3TPX4"/>
<dbReference type="PhosphoSitePlus" id="Q3TPX4"/>
<dbReference type="SwissPalm" id="Q3TPX4"/>
<dbReference type="PaxDb" id="10090-ENSMUSP00000125434"/>
<dbReference type="PeptideAtlas" id="Q3TPX4"/>
<dbReference type="ProteomicsDB" id="275702"/>
<dbReference type="Pumba" id="Q3TPX4"/>
<dbReference type="Antibodypedia" id="24095">
    <property type="antibodies" value="127 antibodies from 26 providers"/>
</dbReference>
<dbReference type="DNASU" id="105504"/>
<dbReference type="Ensembl" id="ENSMUST00000162175.9">
    <property type="protein sequence ID" value="ENSMUSP00000125434.2"/>
    <property type="gene ID" value="ENSMUSG00000061244.15"/>
</dbReference>
<dbReference type="GeneID" id="105504"/>
<dbReference type="KEGG" id="mmu:105504"/>
<dbReference type="UCSC" id="uc007tjv.2">
    <property type="organism name" value="mouse"/>
</dbReference>
<dbReference type="AGR" id="MGI:2145645"/>
<dbReference type="CTD" id="10640"/>
<dbReference type="MGI" id="MGI:2145645">
    <property type="gene designation" value="Exoc5"/>
</dbReference>
<dbReference type="VEuPathDB" id="HostDB:ENSMUSG00000061244"/>
<dbReference type="eggNOG" id="KOG3745">
    <property type="taxonomic scope" value="Eukaryota"/>
</dbReference>
<dbReference type="GeneTree" id="ENSGT00390000012837"/>
<dbReference type="HOGENOM" id="CLU_020771_1_0_1"/>
<dbReference type="InParanoid" id="Q3TPX4"/>
<dbReference type="OMA" id="PLCKHHY"/>
<dbReference type="OrthoDB" id="125856at2759"/>
<dbReference type="PhylomeDB" id="Q3TPX4"/>
<dbReference type="TreeFam" id="TF314966"/>
<dbReference type="Reactome" id="R-MMU-264876">
    <property type="pathway name" value="Insulin processing"/>
</dbReference>
<dbReference type="Reactome" id="R-MMU-5620916">
    <property type="pathway name" value="VxPx cargo-targeting to cilium"/>
</dbReference>
<dbReference type="BioGRID-ORCS" id="105504">
    <property type="hits" value="15 hits in 80 CRISPR screens"/>
</dbReference>
<dbReference type="CD-CODE" id="CE726F99">
    <property type="entry name" value="Postsynaptic density"/>
</dbReference>
<dbReference type="ChiTaRS" id="Exoc5">
    <property type="organism name" value="mouse"/>
</dbReference>
<dbReference type="PRO" id="PR:Q3TPX4"/>
<dbReference type="Proteomes" id="UP000000589">
    <property type="component" value="Chromosome 14"/>
</dbReference>
<dbReference type="RNAct" id="Q3TPX4">
    <property type="molecule type" value="protein"/>
</dbReference>
<dbReference type="Bgee" id="ENSMUSG00000061244">
    <property type="expression patterns" value="Expressed in manus and 223 other cell types or tissues"/>
</dbReference>
<dbReference type="ExpressionAtlas" id="Q3TPX4">
    <property type="expression patterns" value="baseline and differential"/>
</dbReference>
<dbReference type="GO" id="GO:0005829">
    <property type="term" value="C:cytosol"/>
    <property type="evidence" value="ECO:0000304"/>
    <property type="project" value="Reactome"/>
</dbReference>
<dbReference type="GO" id="GO:0000145">
    <property type="term" value="C:exocyst"/>
    <property type="evidence" value="ECO:0000304"/>
    <property type="project" value="MGI"/>
</dbReference>
<dbReference type="GO" id="GO:0030496">
    <property type="term" value="C:midbody"/>
    <property type="evidence" value="ECO:0007669"/>
    <property type="project" value="UniProtKB-SubCell"/>
</dbReference>
<dbReference type="GO" id="GO:0031267">
    <property type="term" value="F:small GTPase binding"/>
    <property type="evidence" value="ECO:0007669"/>
    <property type="project" value="Ensembl"/>
</dbReference>
<dbReference type="GO" id="GO:1904019">
    <property type="term" value="P:epithelial cell apoptotic process"/>
    <property type="evidence" value="ECO:0000315"/>
    <property type="project" value="MGI"/>
</dbReference>
<dbReference type="GO" id="GO:0001736">
    <property type="term" value="P:establishment of planar polarity"/>
    <property type="evidence" value="ECO:0000315"/>
    <property type="project" value="MGI"/>
</dbReference>
<dbReference type="GO" id="GO:0090148">
    <property type="term" value="P:membrane fission"/>
    <property type="evidence" value="ECO:0000303"/>
    <property type="project" value="ComplexPortal"/>
</dbReference>
<dbReference type="GO" id="GO:0000281">
    <property type="term" value="P:mitotic cytokinesis"/>
    <property type="evidence" value="ECO:0000303"/>
    <property type="project" value="ComplexPortal"/>
</dbReference>
<dbReference type="GO" id="GO:1905515">
    <property type="term" value="P:non-motile cilium assembly"/>
    <property type="evidence" value="ECO:0000315"/>
    <property type="project" value="MGI"/>
</dbReference>
<dbReference type="GO" id="GO:0072659">
    <property type="term" value="P:protein localization to plasma membrane"/>
    <property type="evidence" value="ECO:0000315"/>
    <property type="project" value="MGI"/>
</dbReference>
<dbReference type="GO" id="GO:0015031">
    <property type="term" value="P:protein transport"/>
    <property type="evidence" value="ECO:0007669"/>
    <property type="project" value="UniProtKB-KW"/>
</dbReference>
<dbReference type="GO" id="GO:0006904">
    <property type="term" value="P:vesicle docking involved in exocytosis"/>
    <property type="evidence" value="ECO:0000303"/>
    <property type="project" value="ComplexPortal"/>
</dbReference>
<dbReference type="GO" id="GO:0090522">
    <property type="term" value="P:vesicle tethering involved in exocytosis"/>
    <property type="evidence" value="ECO:0000303"/>
    <property type="project" value="ComplexPortal"/>
</dbReference>
<dbReference type="InterPro" id="IPR009976">
    <property type="entry name" value="Sec10-like"/>
</dbReference>
<dbReference type="InterPro" id="IPR048627">
    <property type="entry name" value="Sec10_HB"/>
</dbReference>
<dbReference type="InterPro" id="IPR048625">
    <property type="entry name" value="Sec10_N"/>
</dbReference>
<dbReference type="PANTHER" id="PTHR12100:SF0">
    <property type="entry name" value="EXOCYST COMPLEX COMPONENT 5"/>
    <property type="match status" value="1"/>
</dbReference>
<dbReference type="PANTHER" id="PTHR12100">
    <property type="entry name" value="SEC10"/>
    <property type="match status" value="1"/>
</dbReference>
<dbReference type="Pfam" id="PF07393">
    <property type="entry name" value="Sec10_HB"/>
    <property type="match status" value="1"/>
</dbReference>
<dbReference type="Pfam" id="PF20667">
    <property type="entry name" value="Sec10_N"/>
    <property type="match status" value="1"/>
</dbReference>
<comment type="function">
    <text evidence="1">Component of the exocyst complex involved in the docking of exocytic vesicles with fusion sites on the plasma membrane.</text>
</comment>
<comment type="subunit">
    <text evidence="3 5">The exocyst complex is composed of EXOC1, EXOC2, EXOC3, EXOC4, EXOC5, EXOC6, EXOC7 and EXOC8 (By similarity). Interacts with EXOC3L1 (PubMed:18480549).</text>
</comment>
<comment type="subcellular location">
    <subcellularLocation>
        <location evidence="2">Cytoplasm</location>
    </subcellularLocation>
    <subcellularLocation>
        <location evidence="2">Midbody</location>
    </subcellularLocation>
    <text evidence="2">Localization at the midbody requires the presence of RALA, EXOC2 and EXOC3.</text>
</comment>
<comment type="similarity">
    <text evidence="6">Belongs to the SEC10 family.</text>
</comment>
<protein>
    <recommendedName>
        <fullName>Exocyst complex component 5</fullName>
    </recommendedName>
    <alternativeName>
        <fullName>Exocyst complex component Sec10</fullName>
    </alternativeName>
</protein>